<reference key="1">
    <citation type="journal article" date="2007" name="Nat. Genet.">
        <title>Genomic analysis of Bartonella identifies type IV secretion systems as host adaptability factors.</title>
        <authorList>
            <person name="Saenz H.L."/>
            <person name="Engel P."/>
            <person name="Stoeckli M.C."/>
            <person name="Lanz C."/>
            <person name="Raddatz G."/>
            <person name="Vayssier-Taussat M."/>
            <person name="Birtles R."/>
            <person name="Schuster S.C."/>
            <person name="Dehio C."/>
        </authorList>
    </citation>
    <scope>NUCLEOTIDE SEQUENCE [LARGE SCALE GENOMIC DNA]</scope>
    <source>
        <strain>CIP 105476 / IBS 506</strain>
    </source>
</reference>
<dbReference type="EC" id="6.3.4.4" evidence="1"/>
<dbReference type="EMBL" id="AM260525">
    <property type="protein sequence ID" value="CAK01015.1"/>
    <property type="molecule type" value="Genomic_DNA"/>
</dbReference>
<dbReference type="RefSeq" id="WP_012231101.1">
    <property type="nucleotide sequence ID" value="NC_010161.1"/>
</dbReference>
<dbReference type="SMR" id="A9IQ57"/>
<dbReference type="KEGG" id="btr:BT_0567"/>
<dbReference type="eggNOG" id="COG0104">
    <property type="taxonomic scope" value="Bacteria"/>
</dbReference>
<dbReference type="HOGENOM" id="CLU_029848_0_0_5"/>
<dbReference type="UniPathway" id="UPA00075">
    <property type="reaction ID" value="UER00335"/>
</dbReference>
<dbReference type="Proteomes" id="UP000001592">
    <property type="component" value="Chromosome"/>
</dbReference>
<dbReference type="GO" id="GO:0005737">
    <property type="term" value="C:cytoplasm"/>
    <property type="evidence" value="ECO:0007669"/>
    <property type="project" value="UniProtKB-SubCell"/>
</dbReference>
<dbReference type="GO" id="GO:0004019">
    <property type="term" value="F:adenylosuccinate synthase activity"/>
    <property type="evidence" value="ECO:0007669"/>
    <property type="project" value="UniProtKB-UniRule"/>
</dbReference>
<dbReference type="GO" id="GO:0005525">
    <property type="term" value="F:GTP binding"/>
    <property type="evidence" value="ECO:0007669"/>
    <property type="project" value="UniProtKB-UniRule"/>
</dbReference>
<dbReference type="GO" id="GO:0000287">
    <property type="term" value="F:magnesium ion binding"/>
    <property type="evidence" value="ECO:0007669"/>
    <property type="project" value="UniProtKB-UniRule"/>
</dbReference>
<dbReference type="GO" id="GO:0044208">
    <property type="term" value="P:'de novo' AMP biosynthetic process"/>
    <property type="evidence" value="ECO:0007669"/>
    <property type="project" value="UniProtKB-UniRule"/>
</dbReference>
<dbReference type="GO" id="GO:0046040">
    <property type="term" value="P:IMP metabolic process"/>
    <property type="evidence" value="ECO:0007669"/>
    <property type="project" value="TreeGrafter"/>
</dbReference>
<dbReference type="CDD" id="cd03108">
    <property type="entry name" value="AdSS"/>
    <property type="match status" value="1"/>
</dbReference>
<dbReference type="FunFam" id="1.10.300.10:FF:000001">
    <property type="entry name" value="Adenylosuccinate synthetase"/>
    <property type="match status" value="1"/>
</dbReference>
<dbReference type="FunFam" id="3.90.170.10:FF:000001">
    <property type="entry name" value="Adenylosuccinate synthetase"/>
    <property type="match status" value="1"/>
</dbReference>
<dbReference type="Gene3D" id="3.40.440.10">
    <property type="entry name" value="Adenylosuccinate Synthetase, subunit A, domain 1"/>
    <property type="match status" value="1"/>
</dbReference>
<dbReference type="Gene3D" id="1.10.300.10">
    <property type="entry name" value="Adenylosuccinate Synthetase, subunit A, domain 2"/>
    <property type="match status" value="1"/>
</dbReference>
<dbReference type="Gene3D" id="3.90.170.10">
    <property type="entry name" value="Adenylosuccinate Synthetase, subunit A, domain 3"/>
    <property type="match status" value="1"/>
</dbReference>
<dbReference type="HAMAP" id="MF_00011">
    <property type="entry name" value="Adenylosucc_synth"/>
    <property type="match status" value="1"/>
</dbReference>
<dbReference type="InterPro" id="IPR018220">
    <property type="entry name" value="Adenylosuccin_syn_GTP-bd"/>
</dbReference>
<dbReference type="InterPro" id="IPR033128">
    <property type="entry name" value="Adenylosuccin_syn_Lys_AS"/>
</dbReference>
<dbReference type="InterPro" id="IPR042109">
    <property type="entry name" value="Adenylosuccinate_synth_dom1"/>
</dbReference>
<dbReference type="InterPro" id="IPR042110">
    <property type="entry name" value="Adenylosuccinate_synth_dom2"/>
</dbReference>
<dbReference type="InterPro" id="IPR042111">
    <property type="entry name" value="Adenylosuccinate_synth_dom3"/>
</dbReference>
<dbReference type="InterPro" id="IPR001114">
    <property type="entry name" value="Adenylosuccinate_synthetase"/>
</dbReference>
<dbReference type="InterPro" id="IPR027417">
    <property type="entry name" value="P-loop_NTPase"/>
</dbReference>
<dbReference type="NCBIfam" id="NF002223">
    <property type="entry name" value="PRK01117.1"/>
    <property type="match status" value="1"/>
</dbReference>
<dbReference type="NCBIfam" id="TIGR00184">
    <property type="entry name" value="purA"/>
    <property type="match status" value="1"/>
</dbReference>
<dbReference type="PANTHER" id="PTHR11846">
    <property type="entry name" value="ADENYLOSUCCINATE SYNTHETASE"/>
    <property type="match status" value="1"/>
</dbReference>
<dbReference type="PANTHER" id="PTHR11846:SF0">
    <property type="entry name" value="ADENYLOSUCCINATE SYNTHETASE"/>
    <property type="match status" value="1"/>
</dbReference>
<dbReference type="Pfam" id="PF00709">
    <property type="entry name" value="Adenylsucc_synt"/>
    <property type="match status" value="1"/>
</dbReference>
<dbReference type="SMART" id="SM00788">
    <property type="entry name" value="Adenylsucc_synt"/>
    <property type="match status" value="1"/>
</dbReference>
<dbReference type="SUPFAM" id="SSF52540">
    <property type="entry name" value="P-loop containing nucleoside triphosphate hydrolases"/>
    <property type="match status" value="1"/>
</dbReference>
<dbReference type="PROSITE" id="PS01266">
    <property type="entry name" value="ADENYLOSUCCIN_SYN_1"/>
    <property type="match status" value="1"/>
</dbReference>
<dbReference type="PROSITE" id="PS00513">
    <property type="entry name" value="ADENYLOSUCCIN_SYN_2"/>
    <property type="match status" value="1"/>
</dbReference>
<organism>
    <name type="scientific">Bartonella tribocorum (strain CIP 105476 / IBS 506)</name>
    <dbReference type="NCBI Taxonomy" id="382640"/>
    <lineage>
        <taxon>Bacteria</taxon>
        <taxon>Pseudomonadati</taxon>
        <taxon>Pseudomonadota</taxon>
        <taxon>Alphaproteobacteria</taxon>
        <taxon>Hyphomicrobiales</taxon>
        <taxon>Bartonellaceae</taxon>
        <taxon>Bartonella</taxon>
    </lineage>
</organism>
<gene>
    <name evidence="1" type="primary">purA</name>
    <name type="ordered locus">BT_0567</name>
</gene>
<protein>
    <recommendedName>
        <fullName evidence="1">Adenylosuccinate synthetase</fullName>
        <shortName evidence="1">AMPSase</shortName>
        <shortName evidence="1">AdSS</shortName>
        <ecNumber evidence="1">6.3.4.4</ecNumber>
    </recommendedName>
    <alternativeName>
        <fullName evidence="1">IMP--aspartate ligase</fullName>
    </alternativeName>
</protein>
<proteinExistence type="inferred from homology"/>
<feature type="chain" id="PRO_1000073937" description="Adenylosuccinate synthetase">
    <location>
        <begin position="1"/>
        <end position="429"/>
    </location>
</feature>
<feature type="active site" description="Proton acceptor" evidence="1">
    <location>
        <position position="13"/>
    </location>
</feature>
<feature type="active site" description="Proton donor" evidence="1">
    <location>
        <position position="41"/>
    </location>
</feature>
<feature type="binding site" evidence="1">
    <location>
        <begin position="12"/>
        <end position="18"/>
    </location>
    <ligand>
        <name>GTP</name>
        <dbReference type="ChEBI" id="CHEBI:37565"/>
    </ligand>
</feature>
<feature type="binding site" description="in other chain" evidence="1">
    <location>
        <begin position="13"/>
        <end position="16"/>
    </location>
    <ligand>
        <name>IMP</name>
        <dbReference type="ChEBI" id="CHEBI:58053"/>
        <note>ligand shared between dimeric partners</note>
    </ligand>
</feature>
<feature type="binding site" evidence="1">
    <location>
        <position position="13"/>
    </location>
    <ligand>
        <name>Mg(2+)</name>
        <dbReference type="ChEBI" id="CHEBI:18420"/>
    </ligand>
</feature>
<feature type="binding site" description="in other chain" evidence="1">
    <location>
        <begin position="38"/>
        <end position="41"/>
    </location>
    <ligand>
        <name>IMP</name>
        <dbReference type="ChEBI" id="CHEBI:58053"/>
        <note>ligand shared between dimeric partners</note>
    </ligand>
</feature>
<feature type="binding site" evidence="1">
    <location>
        <begin position="40"/>
        <end position="42"/>
    </location>
    <ligand>
        <name>GTP</name>
        <dbReference type="ChEBI" id="CHEBI:37565"/>
    </ligand>
</feature>
<feature type="binding site" evidence="1">
    <location>
        <position position="40"/>
    </location>
    <ligand>
        <name>Mg(2+)</name>
        <dbReference type="ChEBI" id="CHEBI:18420"/>
    </ligand>
</feature>
<feature type="binding site" description="in other chain" evidence="1">
    <location>
        <position position="129"/>
    </location>
    <ligand>
        <name>IMP</name>
        <dbReference type="ChEBI" id="CHEBI:58053"/>
        <note>ligand shared between dimeric partners</note>
    </ligand>
</feature>
<feature type="binding site" evidence="1">
    <location>
        <position position="143"/>
    </location>
    <ligand>
        <name>IMP</name>
        <dbReference type="ChEBI" id="CHEBI:58053"/>
        <note>ligand shared between dimeric partners</note>
    </ligand>
</feature>
<feature type="binding site" description="in other chain" evidence="1">
    <location>
        <position position="223"/>
    </location>
    <ligand>
        <name>IMP</name>
        <dbReference type="ChEBI" id="CHEBI:58053"/>
        <note>ligand shared between dimeric partners</note>
    </ligand>
</feature>
<feature type="binding site" description="in other chain" evidence="1">
    <location>
        <position position="238"/>
    </location>
    <ligand>
        <name>IMP</name>
        <dbReference type="ChEBI" id="CHEBI:58053"/>
        <note>ligand shared between dimeric partners</note>
    </ligand>
</feature>
<feature type="binding site" evidence="1">
    <location>
        <begin position="298"/>
        <end position="304"/>
    </location>
    <ligand>
        <name>substrate</name>
    </ligand>
</feature>
<feature type="binding site" description="in other chain" evidence="1">
    <location>
        <position position="302"/>
    </location>
    <ligand>
        <name>IMP</name>
        <dbReference type="ChEBI" id="CHEBI:58053"/>
        <note>ligand shared between dimeric partners</note>
    </ligand>
</feature>
<feature type="binding site" evidence="1">
    <location>
        <position position="304"/>
    </location>
    <ligand>
        <name>GTP</name>
        <dbReference type="ChEBI" id="CHEBI:37565"/>
    </ligand>
</feature>
<feature type="binding site" evidence="1">
    <location>
        <begin position="330"/>
        <end position="332"/>
    </location>
    <ligand>
        <name>GTP</name>
        <dbReference type="ChEBI" id="CHEBI:37565"/>
    </ligand>
</feature>
<feature type="binding site" evidence="1">
    <location>
        <begin position="412"/>
        <end position="414"/>
    </location>
    <ligand>
        <name>GTP</name>
        <dbReference type="ChEBI" id="CHEBI:37565"/>
    </ligand>
</feature>
<name>PURA_BART1</name>
<comment type="function">
    <text evidence="1">Plays an important role in the de novo pathway of purine nucleotide biosynthesis. Catalyzes the first committed step in the biosynthesis of AMP from IMP.</text>
</comment>
<comment type="catalytic activity">
    <reaction evidence="1">
        <text>IMP + L-aspartate + GTP = N(6)-(1,2-dicarboxyethyl)-AMP + GDP + phosphate + 2 H(+)</text>
        <dbReference type="Rhea" id="RHEA:15753"/>
        <dbReference type="ChEBI" id="CHEBI:15378"/>
        <dbReference type="ChEBI" id="CHEBI:29991"/>
        <dbReference type="ChEBI" id="CHEBI:37565"/>
        <dbReference type="ChEBI" id="CHEBI:43474"/>
        <dbReference type="ChEBI" id="CHEBI:57567"/>
        <dbReference type="ChEBI" id="CHEBI:58053"/>
        <dbReference type="ChEBI" id="CHEBI:58189"/>
        <dbReference type="EC" id="6.3.4.4"/>
    </reaction>
</comment>
<comment type="cofactor">
    <cofactor evidence="1">
        <name>Mg(2+)</name>
        <dbReference type="ChEBI" id="CHEBI:18420"/>
    </cofactor>
    <text evidence="1">Binds 1 Mg(2+) ion per subunit.</text>
</comment>
<comment type="pathway">
    <text evidence="1">Purine metabolism; AMP biosynthesis via de novo pathway; AMP from IMP: step 1/2.</text>
</comment>
<comment type="subunit">
    <text evidence="1">Homodimer.</text>
</comment>
<comment type="subcellular location">
    <subcellularLocation>
        <location evidence="1">Cytoplasm</location>
    </subcellularLocation>
</comment>
<comment type="similarity">
    <text evidence="1">Belongs to the adenylosuccinate synthetase family.</text>
</comment>
<evidence type="ECO:0000255" key="1">
    <source>
        <dbReference type="HAMAP-Rule" id="MF_00011"/>
    </source>
</evidence>
<accession>A9IQ57</accession>
<sequence length="429" mass="47190">MANVVVVGTQWGDEGKGKIVDWLSERADIVVRYQGGHNAGHTLVIDGVSYKLSLLPSGLVRGKLSIIGNGVVVDPHHFVAELKKLCDQGVKITPEILRIAENAPLILSLHRDLDAIRESGLSGLKIGTTKRGIGPAYEDKVGRRAIRVMDLAEKDTLMAKIERLLRHHNALRRGMGVAEIDSQALYDELMQVADKILPFMDCTWRLLDEGYREGKHILFEGAQGALLDNDFGTYPYVTSSNTVAGQACTGSGMGPGVIHYVLGIAKAYTTRVGEGPFPTEQINDIGEFLGTRGHEFGVVTGRKRRCGWFDAVLVRQMVAICGVQGIALTKLDVLDGLDEIKICIGYELDGRKIDYLPSSMGAQARVKPIYETLEGWKAKTAHTLRWEDLPVQAVKYIRYIEELINTKVALLSTSPEREDTILITDPFAN</sequence>
<keyword id="KW-0963">Cytoplasm</keyword>
<keyword id="KW-0342">GTP-binding</keyword>
<keyword id="KW-0436">Ligase</keyword>
<keyword id="KW-0460">Magnesium</keyword>
<keyword id="KW-0479">Metal-binding</keyword>
<keyword id="KW-0547">Nucleotide-binding</keyword>
<keyword id="KW-0658">Purine biosynthesis</keyword>